<keyword id="KW-0312">Gluconeogenesis</keyword>
<keyword id="KW-0324">Glycolysis</keyword>
<keyword id="KW-0413">Isomerase</keyword>
<keyword id="KW-1185">Reference proteome</keyword>
<organism>
    <name type="scientific">Allorhizobium ampelinum (strain ATCC BAA-846 / DSM 112012 / S4)</name>
    <name type="common">Agrobacterium vitis (strain S4)</name>
    <dbReference type="NCBI Taxonomy" id="311402"/>
    <lineage>
        <taxon>Bacteria</taxon>
        <taxon>Pseudomonadati</taxon>
        <taxon>Pseudomonadota</taxon>
        <taxon>Alphaproteobacteria</taxon>
        <taxon>Hyphomicrobiales</taxon>
        <taxon>Rhizobiaceae</taxon>
        <taxon>Rhizobium/Agrobacterium group</taxon>
        <taxon>Allorhizobium</taxon>
        <taxon>Allorhizobium ampelinum</taxon>
    </lineage>
</organism>
<evidence type="ECO:0000255" key="1">
    <source>
        <dbReference type="HAMAP-Rule" id="MF_01039"/>
    </source>
</evidence>
<dbReference type="EC" id="5.4.2.11" evidence="1"/>
<dbReference type="EMBL" id="CP000633">
    <property type="protein sequence ID" value="ACM35148.1"/>
    <property type="molecule type" value="Genomic_DNA"/>
</dbReference>
<dbReference type="RefSeq" id="WP_012654678.1">
    <property type="nucleotide sequence ID" value="NC_011989.1"/>
</dbReference>
<dbReference type="SMR" id="B9JYQ2"/>
<dbReference type="STRING" id="311402.Avi_0235"/>
<dbReference type="KEGG" id="avi:Avi_0235"/>
<dbReference type="eggNOG" id="COG0588">
    <property type="taxonomic scope" value="Bacteria"/>
</dbReference>
<dbReference type="HOGENOM" id="CLU_033323_1_4_5"/>
<dbReference type="UniPathway" id="UPA00109">
    <property type="reaction ID" value="UER00186"/>
</dbReference>
<dbReference type="Proteomes" id="UP000001596">
    <property type="component" value="Chromosome 1"/>
</dbReference>
<dbReference type="GO" id="GO:0004619">
    <property type="term" value="F:phosphoglycerate mutase activity"/>
    <property type="evidence" value="ECO:0007669"/>
    <property type="project" value="UniProtKB-EC"/>
</dbReference>
<dbReference type="GO" id="GO:0006094">
    <property type="term" value="P:gluconeogenesis"/>
    <property type="evidence" value="ECO:0007669"/>
    <property type="project" value="UniProtKB-UniRule"/>
</dbReference>
<dbReference type="GO" id="GO:0006096">
    <property type="term" value="P:glycolytic process"/>
    <property type="evidence" value="ECO:0007669"/>
    <property type="project" value="UniProtKB-UniRule"/>
</dbReference>
<dbReference type="CDD" id="cd07067">
    <property type="entry name" value="HP_PGM_like"/>
    <property type="match status" value="1"/>
</dbReference>
<dbReference type="Gene3D" id="3.40.50.1240">
    <property type="entry name" value="Phosphoglycerate mutase-like"/>
    <property type="match status" value="1"/>
</dbReference>
<dbReference type="HAMAP" id="MF_01039">
    <property type="entry name" value="PGAM_GpmA"/>
    <property type="match status" value="1"/>
</dbReference>
<dbReference type="InterPro" id="IPR013078">
    <property type="entry name" value="His_Pase_superF_clade-1"/>
</dbReference>
<dbReference type="InterPro" id="IPR029033">
    <property type="entry name" value="His_PPase_superfam"/>
</dbReference>
<dbReference type="InterPro" id="IPR001345">
    <property type="entry name" value="PG/BPGM_mutase_AS"/>
</dbReference>
<dbReference type="InterPro" id="IPR005952">
    <property type="entry name" value="Phosphogly_mut1"/>
</dbReference>
<dbReference type="NCBIfam" id="TIGR01258">
    <property type="entry name" value="pgm_1"/>
    <property type="match status" value="2"/>
</dbReference>
<dbReference type="NCBIfam" id="NF002339">
    <property type="entry name" value="PRK01295.1"/>
    <property type="match status" value="1"/>
</dbReference>
<dbReference type="PANTHER" id="PTHR11931">
    <property type="entry name" value="PHOSPHOGLYCERATE MUTASE"/>
    <property type="match status" value="1"/>
</dbReference>
<dbReference type="Pfam" id="PF00300">
    <property type="entry name" value="His_Phos_1"/>
    <property type="match status" value="1"/>
</dbReference>
<dbReference type="PIRSF" id="PIRSF000709">
    <property type="entry name" value="6PFK_2-Ptase"/>
    <property type="match status" value="1"/>
</dbReference>
<dbReference type="SMART" id="SM00855">
    <property type="entry name" value="PGAM"/>
    <property type="match status" value="1"/>
</dbReference>
<dbReference type="SUPFAM" id="SSF53254">
    <property type="entry name" value="Phosphoglycerate mutase-like"/>
    <property type="match status" value="1"/>
</dbReference>
<dbReference type="PROSITE" id="PS00175">
    <property type="entry name" value="PG_MUTASE"/>
    <property type="match status" value="1"/>
</dbReference>
<gene>
    <name evidence="1" type="primary">gpmA</name>
    <name type="ordered locus">Avi_0235</name>
</gene>
<reference key="1">
    <citation type="journal article" date="2009" name="J. Bacteriol.">
        <title>Genome sequences of three Agrobacterium biovars help elucidate the evolution of multichromosome genomes in bacteria.</title>
        <authorList>
            <person name="Slater S.C."/>
            <person name="Goldman B.S."/>
            <person name="Goodner B."/>
            <person name="Setubal J.C."/>
            <person name="Farrand S.K."/>
            <person name="Nester E.W."/>
            <person name="Burr T.J."/>
            <person name="Banta L."/>
            <person name="Dickerman A.W."/>
            <person name="Paulsen I."/>
            <person name="Otten L."/>
            <person name="Suen G."/>
            <person name="Welch R."/>
            <person name="Almeida N.F."/>
            <person name="Arnold F."/>
            <person name="Burton O.T."/>
            <person name="Du Z."/>
            <person name="Ewing A."/>
            <person name="Godsy E."/>
            <person name="Heisel S."/>
            <person name="Houmiel K.L."/>
            <person name="Jhaveri J."/>
            <person name="Lu J."/>
            <person name="Miller N.M."/>
            <person name="Norton S."/>
            <person name="Chen Q."/>
            <person name="Phoolcharoen W."/>
            <person name="Ohlin V."/>
            <person name="Ondrusek D."/>
            <person name="Pride N."/>
            <person name="Stricklin S.L."/>
            <person name="Sun J."/>
            <person name="Wheeler C."/>
            <person name="Wilson L."/>
            <person name="Zhu H."/>
            <person name="Wood D.W."/>
        </authorList>
    </citation>
    <scope>NUCLEOTIDE SEQUENCE [LARGE SCALE GENOMIC DNA]</scope>
    <source>
        <strain>ATCC BAA-846 / DSM 112012 / S4</strain>
    </source>
</reference>
<proteinExistence type="inferred from homology"/>
<comment type="function">
    <text evidence="1">Catalyzes the interconversion of 2-phosphoglycerate and 3-phosphoglycerate.</text>
</comment>
<comment type="catalytic activity">
    <reaction evidence="1">
        <text>(2R)-2-phosphoglycerate = (2R)-3-phosphoglycerate</text>
        <dbReference type="Rhea" id="RHEA:15901"/>
        <dbReference type="ChEBI" id="CHEBI:58272"/>
        <dbReference type="ChEBI" id="CHEBI:58289"/>
        <dbReference type="EC" id="5.4.2.11"/>
    </reaction>
</comment>
<comment type="pathway">
    <text evidence="1">Carbohydrate degradation; glycolysis; pyruvate from D-glyceraldehyde 3-phosphate: step 3/5.</text>
</comment>
<comment type="subunit">
    <text evidence="1">Homodimer.</text>
</comment>
<comment type="similarity">
    <text evidence="1">Belongs to the phosphoglycerate mutase family. BPG-dependent PGAM subfamily.</text>
</comment>
<accession>B9JYQ2</accession>
<sequence length="211" mass="23237">MTGTLVLVRHGQSDWNLKNLFTGWRDPDLTDLGVQEANAGGKALKDYGIQFDIAFTSDLSRAQKTCGIILDNLGQSGLETIRDQALNERDYGDLSGLNKDDARAKWGEEQVHIWRRSYDIPPPGGESLRDTGARVWPYYLTEILPRVLRGEKVLVAAHGNSLRSLVMVLDKLTKEQILSVNLATGVPMVYKLNADSTVASKDVLGDMSGAH</sequence>
<feature type="chain" id="PRO_1000149495" description="2,3-bisphosphoglycerate-dependent phosphoglycerate mutase">
    <location>
        <begin position="1"/>
        <end position="211"/>
    </location>
</feature>
<feature type="active site" description="Tele-phosphohistidine intermediate" evidence="1">
    <location>
        <position position="10"/>
    </location>
</feature>
<feature type="active site" description="Proton donor/acceptor" evidence="1">
    <location>
        <position position="88"/>
    </location>
</feature>
<feature type="binding site" evidence="1">
    <location>
        <begin position="9"/>
        <end position="16"/>
    </location>
    <ligand>
        <name>substrate</name>
    </ligand>
</feature>
<feature type="binding site" evidence="1">
    <location>
        <begin position="22"/>
        <end position="23"/>
    </location>
    <ligand>
        <name>substrate</name>
    </ligand>
</feature>
<feature type="binding site" evidence="1">
    <location>
        <position position="61"/>
    </location>
    <ligand>
        <name>substrate</name>
    </ligand>
</feature>
<feature type="binding site" evidence="1">
    <location>
        <begin position="88"/>
        <end position="91"/>
    </location>
    <ligand>
        <name>substrate</name>
    </ligand>
</feature>
<feature type="binding site" evidence="1">
    <location>
        <position position="99"/>
    </location>
    <ligand>
        <name>substrate</name>
    </ligand>
</feature>
<feature type="binding site" evidence="1">
    <location>
        <begin position="115"/>
        <end position="116"/>
    </location>
    <ligand>
        <name>substrate</name>
    </ligand>
</feature>
<feature type="binding site" evidence="1">
    <location>
        <begin position="159"/>
        <end position="160"/>
    </location>
    <ligand>
        <name>substrate</name>
    </ligand>
</feature>
<feature type="site" description="Transition state stabilizer" evidence="1">
    <location>
        <position position="158"/>
    </location>
</feature>
<protein>
    <recommendedName>
        <fullName evidence="1">2,3-bisphosphoglycerate-dependent phosphoglycerate mutase</fullName>
        <shortName evidence="1">BPG-dependent PGAM</shortName>
        <shortName evidence="1">PGAM</shortName>
        <shortName evidence="1">Phosphoglyceromutase</shortName>
        <shortName evidence="1">dPGM</shortName>
        <ecNumber evidence="1">5.4.2.11</ecNumber>
    </recommendedName>
</protein>
<name>GPMA_ALLAM</name>